<keyword id="KW-0472">Membrane</keyword>
<keyword id="KW-1185">Reference proteome</keyword>
<keyword id="KW-0677">Repeat</keyword>
<keyword id="KW-0926">Vacuole</keyword>
<comment type="function">
    <text evidence="1 3">Acts as a calcium sensor. May promote vacuolation of aleurone cells in response to signal induced by gibberellin. CBL proteins interact with CIPK serine-threonine protein kinases. Binding of a CBL protein to the regulatory NAF domain of a CIPK protein lead to the activation of the kinase in a calcium-dependent manner (By similarity).</text>
</comment>
<comment type="subunit">
    <text evidence="1">Homodimer.</text>
</comment>
<comment type="subcellular location">
    <subcellularLocation>
        <location evidence="3">Vacuole</location>
        <location evidence="3">Aleurone grain membrane</location>
    </subcellularLocation>
    <text evidence="5">Tonoplast.</text>
</comment>
<comment type="tissue specificity">
    <text evidence="3 4">Expressed in roots, shoots, culms, young spikelets and scutellum.</text>
</comment>
<comment type="induction">
    <text evidence="3">By gibberellin.</text>
</comment>
<comment type="similarity">
    <text evidence="5">Belongs to the calcineurin regulatory subunit family.</text>
</comment>
<protein>
    <recommendedName>
        <fullName>Calcineurin B-like protein 2</fullName>
    </recommendedName>
</protein>
<feature type="chain" id="PRO_0000337765" description="Calcineurin B-like protein 2">
    <location>
        <begin position="1"/>
        <end position="225"/>
    </location>
</feature>
<feature type="domain" description="EF-hand 1" evidence="5">
    <location>
        <begin position="45"/>
        <end position="80"/>
    </location>
</feature>
<feature type="domain" description="EF-hand 2" evidence="2">
    <location>
        <begin position="81"/>
        <end position="116"/>
    </location>
</feature>
<feature type="domain" description="EF-hand 3" evidence="2">
    <location>
        <begin position="118"/>
        <end position="153"/>
    </location>
</feature>
<feature type="domain" description="EF-hand 4" evidence="2">
    <location>
        <begin position="162"/>
        <end position="197"/>
    </location>
</feature>
<feature type="site" description="Involved in dimerization" evidence="1">
    <location>
        <position position="154"/>
    </location>
</feature>
<evidence type="ECO:0000250" key="1"/>
<evidence type="ECO:0000255" key="2">
    <source>
        <dbReference type="PROSITE-ProRule" id="PRU00448"/>
    </source>
</evidence>
<evidence type="ECO:0000269" key="3">
    <source>
    </source>
</evidence>
<evidence type="ECO:0000269" key="4">
    <source>
    </source>
</evidence>
<evidence type="ECO:0000305" key="5"/>
<evidence type="ECO:0000312" key="6">
    <source>
        <dbReference type="EMBL" id="EEE53537.1"/>
    </source>
</evidence>
<proteinExistence type="evidence at transcript level"/>
<dbReference type="EMBL" id="DQ201196">
    <property type="protein sequence ID" value="ABA54177.1"/>
    <property type="molecule type" value="mRNA"/>
</dbReference>
<dbReference type="EMBL" id="DP000011">
    <property type="protein sequence ID" value="ABA99199.2"/>
    <property type="molecule type" value="Genomic_DNA"/>
</dbReference>
<dbReference type="EMBL" id="DP000011">
    <property type="protein sequence ID" value="ABG22071.1"/>
    <property type="molecule type" value="Genomic_DNA"/>
</dbReference>
<dbReference type="EMBL" id="AP008218">
    <property type="protein sequence ID" value="BAF30209.1"/>
    <property type="molecule type" value="Genomic_DNA"/>
</dbReference>
<dbReference type="EMBL" id="AP014968">
    <property type="protein sequence ID" value="BAT17929.1"/>
    <property type="molecule type" value="Genomic_DNA"/>
</dbReference>
<dbReference type="EMBL" id="CM000149">
    <property type="protein sequence ID" value="EEE53537.1"/>
    <property type="molecule type" value="Genomic_DNA"/>
</dbReference>
<dbReference type="RefSeq" id="XP_015620792.1">
    <property type="nucleotide sequence ID" value="XM_015765306.1"/>
</dbReference>
<dbReference type="SMR" id="Q3HRP5"/>
<dbReference type="FunCoup" id="Q3HRP5">
    <property type="interactions" value="857"/>
</dbReference>
<dbReference type="STRING" id="39947.Q3HRP5"/>
<dbReference type="PaxDb" id="39947-Q3HRP5"/>
<dbReference type="EnsemblPlants" id="Os12t0597000-01">
    <property type="protein sequence ID" value="Os12t0597000-01"/>
    <property type="gene ID" value="Os12g0597000"/>
</dbReference>
<dbReference type="Gramene" id="Os12t0597000-01">
    <property type="protein sequence ID" value="Os12t0597000-01"/>
    <property type="gene ID" value="Os12g0597000"/>
</dbReference>
<dbReference type="KEGG" id="dosa:Os12g0597000"/>
<dbReference type="eggNOG" id="KOG0034">
    <property type="taxonomic scope" value="Eukaryota"/>
</dbReference>
<dbReference type="HOGENOM" id="CLU_061288_21_0_1"/>
<dbReference type="InParanoid" id="Q3HRP5"/>
<dbReference type="OMA" id="KHICATV"/>
<dbReference type="OrthoDB" id="191686at2759"/>
<dbReference type="Proteomes" id="UP000000763">
    <property type="component" value="Chromosome 12"/>
</dbReference>
<dbReference type="Proteomes" id="UP000007752">
    <property type="component" value="Chromosome 12"/>
</dbReference>
<dbReference type="Proteomes" id="UP000059680">
    <property type="component" value="Chromosome 12"/>
</dbReference>
<dbReference type="GO" id="GO:0032578">
    <property type="term" value="C:aleurone grain membrane"/>
    <property type="evidence" value="ECO:0007669"/>
    <property type="project" value="UniProtKB-SubCell"/>
</dbReference>
<dbReference type="GO" id="GO:0005773">
    <property type="term" value="C:vacuole"/>
    <property type="evidence" value="ECO:0007669"/>
    <property type="project" value="UniProtKB-KW"/>
</dbReference>
<dbReference type="GO" id="GO:0005509">
    <property type="term" value="F:calcium ion binding"/>
    <property type="evidence" value="ECO:0007669"/>
    <property type="project" value="InterPro"/>
</dbReference>
<dbReference type="GO" id="GO:0019900">
    <property type="term" value="F:kinase binding"/>
    <property type="evidence" value="ECO:0007669"/>
    <property type="project" value="InterPro"/>
</dbReference>
<dbReference type="GO" id="GO:0019722">
    <property type="term" value="P:calcium-mediated signaling"/>
    <property type="evidence" value="ECO:0007669"/>
    <property type="project" value="InterPro"/>
</dbReference>
<dbReference type="FunFam" id="1.10.238.10:FF:000073">
    <property type="entry name" value="calcineurin B-like protein 3"/>
    <property type="match status" value="1"/>
</dbReference>
<dbReference type="Gene3D" id="1.10.238.10">
    <property type="entry name" value="EF-hand"/>
    <property type="match status" value="1"/>
</dbReference>
<dbReference type="InterPro" id="IPR045198">
    <property type="entry name" value="CNBL1-10"/>
</dbReference>
<dbReference type="InterPro" id="IPR011992">
    <property type="entry name" value="EF-hand-dom_pair"/>
</dbReference>
<dbReference type="InterPro" id="IPR002048">
    <property type="entry name" value="EF_hand_dom"/>
</dbReference>
<dbReference type="PANTHER" id="PTHR23056">
    <property type="entry name" value="CALCINEURIN B"/>
    <property type="match status" value="1"/>
</dbReference>
<dbReference type="PANTHER" id="PTHR23056:SF106">
    <property type="entry name" value="CALCINEURIN B-LIKE PROTEIN 2"/>
    <property type="match status" value="1"/>
</dbReference>
<dbReference type="Pfam" id="PF13499">
    <property type="entry name" value="EF-hand_7"/>
    <property type="match status" value="1"/>
</dbReference>
<dbReference type="Pfam" id="PF13833">
    <property type="entry name" value="EF-hand_8"/>
    <property type="match status" value="1"/>
</dbReference>
<dbReference type="PRINTS" id="PR00450">
    <property type="entry name" value="RECOVERIN"/>
</dbReference>
<dbReference type="SMART" id="SM00054">
    <property type="entry name" value="EFh"/>
    <property type="match status" value="3"/>
</dbReference>
<dbReference type="SUPFAM" id="SSF47473">
    <property type="entry name" value="EF-hand"/>
    <property type="match status" value="1"/>
</dbReference>
<dbReference type="PROSITE" id="PS50222">
    <property type="entry name" value="EF_HAND_2"/>
    <property type="match status" value="3"/>
</dbReference>
<accession>Q3HRP5</accession>
<accession>B9GE30</accession>
<accession>Q2QMP2</accession>
<name>CNBL2_ORYSJ</name>
<reference key="1">
    <citation type="journal article" date="2008" name="Gene">
        <title>Expression analysis of the calcineurin B-like gene family in rice (Oryza sativa L.) under environmental stresses.</title>
        <authorList>
            <person name="Gu Z."/>
            <person name="Ma B."/>
            <person name="Jiang Y."/>
            <person name="Chen Z."/>
            <person name="Su X."/>
            <person name="Zhang H."/>
        </authorList>
    </citation>
    <scope>NUCLEOTIDE SEQUENCE [MRNA]</scope>
    <scope>TISSUE SPECIFICITY</scope>
    <scope>GENE FAMILY</scope>
    <source>
        <strain>cv. Nipponbare</strain>
        <tissue>Seedling</tissue>
    </source>
</reference>
<reference key="2">
    <citation type="journal article" date="2005" name="BMC Biol.">
        <title>The sequence of rice chromosomes 11 and 12, rich in disease resistance genes and recent gene duplications.</title>
        <authorList>
            <consortium name="The rice chromosomes 11 and 12 sequencing consortia"/>
        </authorList>
    </citation>
    <scope>NUCLEOTIDE SEQUENCE [LARGE SCALE GENOMIC DNA]</scope>
    <source>
        <strain>cv. Nipponbare</strain>
    </source>
</reference>
<reference key="3">
    <citation type="journal article" date="2005" name="Nature">
        <title>The map-based sequence of the rice genome.</title>
        <authorList>
            <consortium name="International rice genome sequencing project (IRGSP)"/>
        </authorList>
    </citation>
    <scope>NUCLEOTIDE SEQUENCE [LARGE SCALE GENOMIC DNA]</scope>
    <source>
        <strain>cv. Nipponbare</strain>
    </source>
</reference>
<reference key="4">
    <citation type="journal article" date="2008" name="Nucleic Acids Res.">
        <title>The rice annotation project database (RAP-DB): 2008 update.</title>
        <authorList>
            <consortium name="The rice annotation project (RAP)"/>
        </authorList>
    </citation>
    <scope>GENOME REANNOTATION</scope>
    <source>
        <strain>cv. Nipponbare</strain>
    </source>
</reference>
<reference key="5">
    <citation type="journal article" date="2013" name="Rice">
        <title>Improvement of the Oryza sativa Nipponbare reference genome using next generation sequence and optical map data.</title>
        <authorList>
            <person name="Kawahara Y."/>
            <person name="de la Bastide M."/>
            <person name="Hamilton J.P."/>
            <person name="Kanamori H."/>
            <person name="McCombie W.R."/>
            <person name="Ouyang S."/>
            <person name="Schwartz D.C."/>
            <person name="Tanaka T."/>
            <person name="Wu J."/>
            <person name="Zhou S."/>
            <person name="Childs K.L."/>
            <person name="Davidson R.M."/>
            <person name="Lin H."/>
            <person name="Quesada-Ocampo L."/>
            <person name="Vaillancourt B."/>
            <person name="Sakai H."/>
            <person name="Lee S.S."/>
            <person name="Kim J."/>
            <person name="Numa H."/>
            <person name="Itoh T."/>
            <person name="Buell C.R."/>
            <person name="Matsumoto T."/>
        </authorList>
    </citation>
    <scope>GENOME REANNOTATION</scope>
    <source>
        <strain>cv. Nipponbare</strain>
    </source>
</reference>
<reference key="6">
    <citation type="journal article" date="2005" name="PLoS Biol.">
        <title>The genomes of Oryza sativa: a history of duplications.</title>
        <authorList>
            <person name="Yu J."/>
            <person name="Wang J."/>
            <person name="Lin W."/>
            <person name="Li S."/>
            <person name="Li H."/>
            <person name="Zhou J."/>
            <person name="Ni P."/>
            <person name="Dong W."/>
            <person name="Hu S."/>
            <person name="Zeng C."/>
            <person name="Zhang J."/>
            <person name="Zhang Y."/>
            <person name="Li R."/>
            <person name="Xu Z."/>
            <person name="Li S."/>
            <person name="Li X."/>
            <person name="Zheng H."/>
            <person name="Cong L."/>
            <person name="Lin L."/>
            <person name="Yin J."/>
            <person name="Geng J."/>
            <person name="Li G."/>
            <person name="Shi J."/>
            <person name="Liu J."/>
            <person name="Lv H."/>
            <person name="Li J."/>
            <person name="Wang J."/>
            <person name="Deng Y."/>
            <person name="Ran L."/>
            <person name="Shi X."/>
            <person name="Wang X."/>
            <person name="Wu Q."/>
            <person name="Li C."/>
            <person name="Ren X."/>
            <person name="Wang J."/>
            <person name="Wang X."/>
            <person name="Li D."/>
            <person name="Liu D."/>
            <person name="Zhang X."/>
            <person name="Ji Z."/>
            <person name="Zhao W."/>
            <person name="Sun Y."/>
            <person name="Zhang Z."/>
            <person name="Bao J."/>
            <person name="Han Y."/>
            <person name="Dong L."/>
            <person name="Ji J."/>
            <person name="Chen P."/>
            <person name="Wu S."/>
            <person name="Liu J."/>
            <person name="Xiao Y."/>
            <person name="Bu D."/>
            <person name="Tan J."/>
            <person name="Yang L."/>
            <person name="Ye C."/>
            <person name="Zhang J."/>
            <person name="Xu J."/>
            <person name="Zhou Y."/>
            <person name="Yu Y."/>
            <person name="Zhang B."/>
            <person name="Zhuang S."/>
            <person name="Wei H."/>
            <person name="Liu B."/>
            <person name="Lei M."/>
            <person name="Yu H."/>
            <person name="Li Y."/>
            <person name="Xu H."/>
            <person name="Wei S."/>
            <person name="He X."/>
            <person name="Fang L."/>
            <person name="Zhang Z."/>
            <person name="Zhang Y."/>
            <person name="Huang X."/>
            <person name="Su Z."/>
            <person name="Tong W."/>
            <person name="Li J."/>
            <person name="Tong Z."/>
            <person name="Li S."/>
            <person name="Ye J."/>
            <person name="Wang L."/>
            <person name="Fang L."/>
            <person name="Lei T."/>
            <person name="Chen C.-S."/>
            <person name="Chen H.-C."/>
            <person name="Xu Z."/>
            <person name="Li H."/>
            <person name="Huang H."/>
            <person name="Zhang F."/>
            <person name="Xu H."/>
            <person name="Li N."/>
            <person name="Zhao C."/>
            <person name="Li S."/>
            <person name="Dong L."/>
            <person name="Huang Y."/>
            <person name="Li L."/>
            <person name="Xi Y."/>
            <person name="Qi Q."/>
            <person name="Li W."/>
            <person name="Zhang B."/>
            <person name="Hu W."/>
            <person name="Zhang Y."/>
            <person name="Tian X."/>
            <person name="Jiao Y."/>
            <person name="Liang X."/>
            <person name="Jin J."/>
            <person name="Gao L."/>
            <person name="Zheng W."/>
            <person name="Hao B."/>
            <person name="Liu S.-M."/>
            <person name="Wang W."/>
            <person name="Yuan L."/>
            <person name="Cao M."/>
            <person name="McDermott J."/>
            <person name="Samudrala R."/>
            <person name="Wang J."/>
            <person name="Wong G.K.-S."/>
            <person name="Yang H."/>
        </authorList>
    </citation>
    <scope>NUCLEOTIDE SEQUENCE [LARGE SCALE GENOMIC DNA]</scope>
    <source>
        <strain>cv. Nipponbare</strain>
    </source>
</reference>
<reference key="7">
    <citation type="journal article" date="2004" name="Plant Physiol.">
        <title>Calcium sensors and their interacting protein kinases: genomics of the Arabidopsis and rice CBL-CIPK signaling networks.</title>
        <authorList>
            <person name="Kolukisaoglu U."/>
            <person name="Weinl S."/>
            <person name="Blazevic D."/>
            <person name="Batistic O."/>
            <person name="Kudla J."/>
        </authorList>
    </citation>
    <scope>GENE FAMILY</scope>
    <scope>NOMENCLATURE</scope>
</reference>
<reference key="8">
    <citation type="journal article" date="2005" name="Plant Physiol.">
        <title>A gibberellin-regulated calcineurin B in rice localizes to the tonoplast and is implicated in vacuole function.</title>
        <authorList>
            <person name="Hwang Y.-S."/>
            <person name="Bethke P.C."/>
            <person name="Cheong Y.H."/>
            <person name="Chang H.-S."/>
            <person name="Zhu T."/>
            <person name="Jones R.L."/>
        </authorList>
    </citation>
    <scope>FUNCTION</scope>
    <scope>SUBCELLULAR LOCATION</scope>
    <scope>TISSUE SPECIFICITY</scope>
    <scope>INDUCTION</scope>
    <scope>GENE FAMILY</scope>
</reference>
<gene>
    <name type="primary">CBL2</name>
    <name type="ordered locus">Os12g0597000</name>
    <name type="ordered locus">LOC_Os12g40510</name>
    <name evidence="6" type="ORF">OsJ_36745</name>
</gene>
<sequence>MVQCLDGVRQLLAVVFKCCDLELKQPRGLEDPQVLARETVFSVSEVEALYELFKKISSAVIDDGLINKEEFQLALFKTSKKESLFADRVFDLFDTKHNGILGFDEFARALSVFHPSAPLDEKIDFSFQLYDLKQQGYIERQEVKQMVVATLAESGMNLSDEIIESIIDKTFEEADTKHDGRIDKEEWRNLVLRHPSLLKNMTLQYLKDITTTFPSFVFHSQVDDT</sequence>
<organism>
    <name type="scientific">Oryza sativa subsp. japonica</name>
    <name type="common">Rice</name>
    <dbReference type="NCBI Taxonomy" id="39947"/>
    <lineage>
        <taxon>Eukaryota</taxon>
        <taxon>Viridiplantae</taxon>
        <taxon>Streptophyta</taxon>
        <taxon>Embryophyta</taxon>
        <taxon>Tracheophyta</taxon>
        <taxon>Spermatophyta</taxon>
        <taxon>Magnoliopsida</taxon>
        <taxon>Liliopsida</taxon>
        <taxon>Poales</taxon>
        <taxon>Poaceae</taxon>
        <taxon>BOP clade</taxon>
        <taxon>Oryzoideae</taxon>
        <taxon>Oryzeae</taxon>
        <taxon>Oryzinae</taxon>
        <taxon>Oryza</taxon>
        <taxon>Oryza sativa</taxon>
    </lineage>
</organism>